<accession>Q9UJX5</accession>
<accession>A8K8H1</accession>
<accession>E9PCR4</accession>
<accession>Q6PCC6</accession>
<accession>Q9NSH6</accession>
<gene>
    <name type="primary">ANAPC4</name>
    <name type="synonym">APC4</name>
</gene>
<reference key="1">
    <citation type="journal article" date="1998" name="Science">
        <title>Identification of a cullin homology region in a subunit of the anaphase-promoting complex.</title>
        <authorList>
            <person name="Yu H."/>
            <person name="Peters J.-M."/>
            <person name="King R.W."/>
            <person name="Page A.M."/>
            <person name="Hieter P."/>
            <person name="Kirschner M.W."/>
        </authorList>
    </citation>
    <scope>NUCLEOTIDE SEQUENCE [MRNA] (ISOFORM 1)</scope>
    <scope>SUBUNIT</scope>
</reference>
<reference key="2">
    <citation type="journal article" date="2004" name="Nat. Genet.">
        <title>Complete sequencing and characterization of 21,243 full-length human cDNAs.</title>
        <authorList>
            <person name="Ota T."/>
            <person name="Suzuki Y."/>
            <person name="Nishikawa T."/>
            <person name="Otsuki T."/>
            <person name="Sugiyama T."/>
            <person name="Irie R."/>
            <person name="Wakamatsu A."/>
            <person name="Hayashi K."/>
            <person name="Sato H."/>
            <person name="Nagai K."/>
            <person name="Kimura K."/>
            <person name="Makita H."/>
            <person name="Sekine M."/>
            <person name="Obayashi M."/>
            <person name="Nishi T."/>
            <person name="Shibahara T."/>
            <person name="Tanaka T."/>
            <person name="Ishii S."/>
            <person name="Yamamoto J."/>
            <person name="Saito K."/>
            <person name="Kawai Y."/>
            <person name="Isono Y."/>
            <person name="Nakamura Y."/>
            <person name="Nagahari K."/>
            <person name="Murakami K."/>
            <person name="Yasuda T."/>
            <person name="Iwayanagi T."/>
            <person name="Wagatsuma M."/>
            <person name="Shiratori A."/>
            <person name="Sudo H."/>
            <person name="Hosoiri T."/>
            <person name="Kaku Y."/>
            <person name="Kodaira H."/>
            <person name="Kondo H."/>
            <person name="Sugawara M."/>
            <person name="Takahashi M."/>
            <person name="Kanda K."/>
            <person name="Yokoi T."/>
            <person name="Furuya T."/>
            <person name="Kikkawa E."/>
            <person name="Omura Y."/>
            <person name="Abe K."/>
            <person name="Kamihara K."/>
            <person name="Katsuta N."/>
            <person name="Sato K."/>
            <person name="Tanikawa M."/>
            <person name="Yamazaki M."/>
            <person name="Ninomiya K."/>
            <person name="Ishibashi T."/>
            <person name="Yamashita H."/>
            <person name="Murakawa K."/>
            <person name="Fujimori K."/>
            <person name="Tanai H."/>
            <person name="Kimata M."/>
            <person name="Watanabe M."/>
            <person name="Hiraoka S."/>
            <person name="Chiba Y."/>
            <person name="Ishida S."/>
            <person name="Ono Y."/>
            <person name="Takiguchi S."/>
            <person name="Watanabe S."/>
            <person name="Yosida M."/>
            <person name="Hotuta T."/>
            <person name="Kusano J."/>
            <person name="Kanehori K."/>
            <person name="Takahashi-Fujii A."/>
            <person name="Hara H."/>
            <person name="Tanase T.-O."/>
            <person name="Nomura Y."/>
            <person name="Togiya S."/>
            <person name="Komai F."/>
            <person name="Hara R."/>
            <person name="Takeuchi K."/>
            <person name="Arita M."/>
            <person name="Imose N."/>
            <person name="Musashino K."/>
            <person name="Yuuki H."/>
            <person name="Oshima A."/>
            <person name="Sasaki N."/>
            <person name="Aotsuka S."/>
            <person name="Yoshikawa Y."/>
            <person name="Matsunawa H."/>
            <person name="Ichihara T."/>
            <person name="Shiohata N."/>
            <person name="Sano S."/>
            <person name="Moriya S."/>
            <person name="Momiyama H."/>
            <person name="Satoh N."/>
            <person name="Takami S."/>
            <person name="Terashima Y."/>
            <person name="Suzuki O."/>
            <person name="Nakagawa S."/>
            <person name="Senoh A."/>
            <person name="Mizoguchi H."/>
            <person name="Goto Y."/>
            <person name="Shimizu F."/>
            <person name="Wakebe H."/>
            <person name="Hishigaki H."/>
            <person name="Watanabe T."/>
            <person name="Sugiyama A."/>
            <person name="Takemoto M."/>
            <person name="Kawakami B."/>
            <person name="Yamazaki M."/>
            <person name="Watanabe K."/>
            <person name="Kumagai A."/>
            <person name="Itakura S."/>
            <person name="Fukuzumi Y."/>
            <person name="Fujimori Y."/>
            <person name="Komiyama M."/>
            <person name="Tashiro H."/>
            <person name="Tanigami A."/>
            <person name="Fujiwara T."/>
            <person name="Ono T."/>
            <person name="Yamada K."/>
            <person name="Fujii Y."/>
            <person name="Ozaki K."/>
            <person name="Hirao M."/>
            <person name="Ohmori Y."/>
            <person name="Kawabata A."/>
            <person name="Hikiji T."/>
            <person name="Kobatake N."/>
            <person name="Inagaki H."/>
            <person name="Ikema Y."/>
            <person name="Okamoto S."/>
            <person name="Okitani R."/>
            <person name="Kawakami T."/>
            <person name="Noguchi S."/>
            <person name="Itoh T."/>
            <person name="Shigeta K."/>
            <person name="Senba T."/>
            <person name="Matsumura K."/>
            <person name="Nakajima Y."/>
            <person name="Mizuno T."/>
            <person name="Morinaga M."/>
            <person name="Sasaki M."/>
            <person name="Togashi T."/>
            <person name="Oyama M."/>
            <person name="Hata H."/>
            <person name="Watanabe M."/>
            <person name="Komatsu T."/>
            <person name="Mizushima-Sugano J."/>
            <person name="Satoh T."/>
            <person name="Shirai Y."/>
            <person name="Takahashi Y."/>
            <person name="Nakagawa K."/>
            <person name="Okumura K."/>
            <person name="Nagase T."/>
            <person name="Nomura N."/>
            <person name="Kikuchi H."/>
            <person name="Masuho Y."/>
            <person name="Yamashita R."/>
            <person name="Nakai K."/>
            <person name="Yada T."/>
            <person name="Nakamura Y."/>
            <person name="Ohara O."/>
            <person name="Isogai T."/>
            <person name="Sugano S."/>
        </authorList>
    </citation>
    <scope>NUCLEOTIDE SEQUENCE [LARGE SCALE MRNA] (ISOFORM 1)</scope>
    <source>
        <tissue>Testis</tissue>
    </source>
</reference>
<reference key="3">
    <citation type="submission" date="2005-07" db="EMBL/GenBank/DDBJ databases">
        <authorList>
            <person name="Mural R.J."/>
            <person name="Istrail S."/>
            <person name="Sutton G.G."/>
            <person name="Florea L."/>
            <person name="Halpern A.L."/>
            <person name="Mobarry C.M."/>
            <person name="Lippert R."/>
            <person name="Walenz B."/>
            <person name="Shatkay H."/>
            <person name="Dew I."/>
            <person name="Miller J.R."/>
            <person name="Flanigan M.J."/>
            <person name="Edwards N.J."/>
            <person name="Bolanos R."/>
            <person name="Fasulo D."/>
            <person name="Halldorsson B.V."/>
            <person name="Hannenhalli S."/>
            <person name="Turner R."/>
            <person name="Yooseph S."/>
            <person name="Lu F."/>
            <person name="Nusskern D.R."/>
            <person name="Shue B.C."/>
            <person name="Zheng X.H."/>
            <person name="Zhong F."/>
            <person name="Delcher A.L."/>
            <person name="Huson D.H."/>
            <person name="Kravitz S.A."/>
            <person name="Mouchard L."/>
            <person name="Reinert K."/>
            <person name="Remington K.A."/>
            <person name="Clark A.G."/>
            <person name="Waterman M.S."/>
            <person name="Eichler E.E."/>
            <person name="Adams M.D."/>
            <person name="Hunkapiller M.W."/>
            <person name="Myers E.W."/>
            <person name="Venter J.C."/>
        </authorList>
    </citation>
    <scope>NUCLEOTIDE SEQUENCE [LARGE SCALE GENOMIC DNA]</scope>
</reference>
<reference key="4">
    <citation type="journal article" date="2004" name="Genome Res.">
        <title>The status, quality, and expansion of the NIH full-length cDNA project: the Mammalian Gene Collection (MGC).</title>
        <authorList>
            <consortium name="The MGC Project Team"/>
        </authorList>
    </citation>
    <scope>NUCLEOTIDE SEQUENCE [LARGE SCALE MRNA] (ISOFORM 1)</scope>
    <source>
        <tissue>Placenta</tissue>
    </source>
</reference>
<reference key="5">
    <citation type="journal article" date="2007" name="BMC Genomics">
        <title>The full-ORF clone resource of the German cDNA consortium.</title>
        <authorList>
            <person name="Bechtel S."/>
            <person name="Rosenfelder H."/>
            <person name="Duda A."/>
            <person name="Schmidt C.P."/>
            <person name="Ernst U."/>
            <person name="Wellenreuther R."/>
            <person name="Mehrle A."/>
            <person name="Schuster C."/>
            <person name="Bahr A."/>
            <person name="Bloecker H."/>
            <person name="Heubner D."/>
            <person name="Hoerlein A."/>
            <person name="Michel G."/>
            <person name="Wedler H."/>
            <person name="Koehrer K."/>
            <person name="Ottenwaelder B."/>
            <person name="Poustka A."/>
            <person name="Wiemann S."/>
            <person name="Schupp I."/>
        </authorList>
    </citation>
    <scope>NUCLEOTIDE SEQUENCE [LARGE SCALE MRNA] OF 434-808 (ISOFORM 2)</scope>
    <source>
        <tissue>Amygdala</tissue>
    </source>
</reference>
<reference key="6">
    <citation type="journal article" date="2003" name="EMBO J.">
        <title>Mitotic regulation of the human anaphase-promoting complex by phosphorylation.</title>
        <authorList>
            <person name="Kraft C."/>
            <person name="Herzog F."/>
            <person name="Gieffers C."/>
            <person name="Mechtler K."/>
            <person name="Hagting A."/>
            <person name="Pines J."/>
            <person name="Peters J.-M."/>
        </authorList>
    </citation>
    <scope>PHOSPHORYLATION AT TYR-469 AND SER-779</scope>
</reference>
<reference key="7">
    <citation type="journal article" date="2008" name="Cell">
        <title>Mechanism of ubiquitin-chain formation by the human anaphase-promoting complex.</title>
        <authorList>
            <person name="Jin L."/>
            <person name="Williamson A."/>
            <person name="Banerjee S."/>
            <person name="Philipp I."/>
            <person name="Rape M."/>
        </authorList>
    </citation>
    <scope>FUNCTION OF THE APC/C</scope>
</reference>
<reference key="8">
    <citation type="journal article" date="2008" name="J. Cell Sci.">
        <title>EML3 is a nuclear microtubule-binding protein required for the correct alignment of chromosomes in metaphase.</title>
        <authorList>
            <person name="Tegha-Dunghu J."/>
            <person name="Neumann B."/>
            <person name="Reber S."/>
            <person name="Krause R."/>
            <person name="Erfle H."/>
            <person name="Walter T."/>
            <person name="Held M."/>
            <person name="Rogers P."/>
            <person name="Hupfeld K."/>
            <person name="Ruppert T."/>
            <person name="Ellenberg J."/>
            <person name="Gruss O.J."/>
        </authorList>
    </citation>
    <scope>SUBCELLULAR LOCATION</scope>
</reference>
<reference key="9">
    <citation type="journal article" date="2008" name="Proc. Natl. Acad. Sci. U.S.A.">
        <title>A quantitative atlas of mitotic phosphorylation.</title>
        <authorList>
            <person name="Dephoure N."/>
            <person name="Zhou C."/>
            <person name="Villen J."/>
            <person name="Beausoleil S.A."/>
            <person name="Bakalarski C.E."/>
            <person name="Elledge S.J."/>
            <person name="Gygi S.P."/>
        </authorList>
    </citation>
    <scope>IDENTIFICATION BY MASS SPECTROMETRY [LARGE SCALE ANALYSIS]</scope>
    <source>
        <tissue>Cervix carcinoma</tissue>
    </source>
</reference>
<reference key="10">
    <citation type="journal article" date="2009" name="Sci. Signal.">
        <title>Quantitative phosphoproteomic analysis of T cell receptor signaling reveals system-wide modulation of protein-protein interactions.</title>
        <authorList>
            <person name="Mayya V."/>
            <person name="Lundgren D.H."/>
            <person name="Hwang S.-I."/>
            <person name="Rezaul K."/>
            <person name="Wu L."/>
            <person name="Eng J.K."/>
            <person name="Rodionov V."/>
            <person name="Han D.K."/>
        </authorList>
    </citation>
    <scope>PHOSPHORYLATION [LARGE SCALE ANALYSIS] AT SER-757; SER-758 AND SER-777</scope>
    <scope>IDENTIFICATION BY MASS SPECTROMETRY [LARGE SCALE ANALYSIS]</scope>
    <source>
        <tissue>Leukemic T-cell</tissue>
    </source>
</reference>
<reference key="11">
    <citation type="journal article" date="2010" name="Sci. Signal.">
        <title>Quantitative phosphoproteomics reveals widespread full phosphorylation site occupancy during mitosis.</title>
        <authorList>
            <person name="Olsen J.V."/>
            <person name="Vermeulen M."/>
            <person name="Santamaria A."/>
            <person name="Kumar C."/>
            <person name="Miller M.L."/>
            <person name="Jensen L.J."/>
            <person name="Gnad F."/>
            <person name="Cox J."/>
            <person name="Jensen T.S."/>
            <person name="Nigg E.A."/>
            <person name="Brunak S."/>
            <person name="Mann M."/>
        </authorList>
    </citation>
    <scope>IDENTIFICATION BY MASS SPECTROMETRY [LARGE SCALE ANALYSIS]</scope>
    <source>
        <tissue>Cervix carcinoma</tissue>
    </source>
</reference>
<reference key="12">
    <citation type="journal article" date="2013" name="J. Proteome Res.">
        <title>Toward a comprehensive characterization of a human cancer cell phosphoproteome.</title>
        <authorList>
            <person name="Zhou H."/>
            <person name="Di Palma S."/>
            <person name="Preisinger C."/>
            <person name="Peng M."/>
            <person name="Polat A.N."/>
            <person name="Heck A.J."/>
            <person name="Mohammed S."/>
        </authorList>
    </citation>
    <scope>PHOSPHORYLATION [LARGE SCALE ANALYSIS] AT SER-777</scope>
    <scope>IDENTIFICATION BY MASS SPECTROMETRY [LARGE SCALE ANALYSIS]</scope>
    <source>
        <tissue>Cervix carcinoma</tissue>
        <tissue>Erythroleukemia</tissue>
    </source>
</reference>
<reference key="13">
    <citation type="journal article" date="2017" name="Cell">
        <title>Assembly and function of heterotypic ubiquitin chains in cell-cycle and protein quality control.</title>
        <authorList>
            <person name="Yau R.G."/>
            <person name="Doerner K."/>
            <person name="Castellanos E.R."/>
            <person name="Haakonsen D.L."/>
            <person name="Werner A."/>
            <person name="Wang N."/>
            <person name="Yang X.W."/>
            <person name="Martinez-Martin N."/>
            <person name="Matsumoto M.L."/>
            <person name="Dixit V.M."/>
            <person name="Rape M."/>
        </authorList>
    </citation>
    <scope>FUNCTION</scope>
    <scope>PATHWAY</scope>
</reference>
<reference key="14">
    <citation type="journal article" date="2017" name="Nat. Struct. Mol. Biol.">
        <title>Site-specific mapping of the human SUMO proteome reveals co-modification with phosphorylation.</title>
        <authorList>
            <person name="Hendriks I.A."/>
            <person name="Lyon D."/>
            <person name="Young C."/>
            <person name="Jensen L.J."/>
            <person name="Vertegaal A.C."/>
            <person name="Nielsen M.L."/>
        </authorList>
    </citation>
    <scope>SUMOYLATION [LARGE SCALE ANALYSIS] AT LYS-772 AND LYS-798</scope>
    <scope>IDENTIFICATION BY MASS SPECTROMETRY [LARGE SCALE ANALYSIS]</scope>
</reference>
<reference key="15">
    <citation type="journal article" date="2022" name="Clin. Genet.">
        <title>A homozygous loss-of-function mutation in FBXO43 causes human non-obstructive azoospermia.</title>
        <authorList>
            <person name="Wu H."/>
            <person name="Zhang X."/>
            <person name="Shen Q."/>
            <person name="Liu Y."/>
            <person name="Gao Y."/>
            <person name="Wang G."/>
            <person name="Lv M."/>
            <person name="Hua R."/>
            <person name="Xu Y."/>
            <person name="Zhou P."/>
            <person name="Wei Z."/>
            <person name="Tao F."/>
            <person name="He X."/>
            <person name="Cao Y."/>
            <person name="Liu M."/>
        </authorList>
    </citation>
    <scope>INTERACTION WITH FBXO43</scope>
</reference>
<reference key="16">
    <citation type="journal article" date="2005" name="Mol. Cell">
        <title>Localization of the coactivator Cdh1 and the cullin subunit Apc2 in a cryo-electron microscopy model of vertebrate APC/C.</title>
        <authorList>
            <person name="Dube P."/>
            <person name="Herzog F."/>
            <person name="Gieffers C."/>
            <person name="Sander B."/>
            <person name="Riedel D."/>
            <person name="Mueller S.A."/>
            <person name="Engel A."/>
            <person name="Peters J.-M."/>
            <person name="Stark H."/>
        </authorList>
    </citation>
    <scope>ELECTRON MICROSCOPY OF THE APC/C</scope>
</reference>
<reference key="17">
    <citation type="journal article" date="2014" name="Nature">
        <title>Molecular architecture and mechanism of the anaphase-promoting complex.</title>
        <authorList>
            <person name="Chang L."/>
            <person name="Zhang Z."/>
            <person name="Yang J."/>
            <person name="McLaughlin S.H."/>
            <person name="Barford D."/>
        </authorList>
    </citation>
    <scope>STRUCTURE BY ELECTRON MICROSCOPY (7.4 ANGSTROMS) OF THE APC/C</scope>
    <scope>SUBUNIT</scope>
</reference>
<reference evidence="13 14" key="18">
    <citation type="journal article" date="2015" name="Nature">
        <title>Atomic structure of the APC/C and its mechanism of protein ubiquitination.</title>
        <authorList>
            <person name="Chang L."/>
            <person name="Zhang Z."/>
            <person name="Yang J."/>
            <person name="McLaughlin S.H."/>
            <person name="Barford D."/>
        </authorList>
    </citation>
    <scope>STRUCTURE BY ELECTRON MICROSCOPY (3.60 ANGSTROMS) OF APC/C</scope>
    <scope>SUBUNIT</scope>
</reference>
<reference evidence="15 16" key="19">
    <citation type="journal article" date="2016" name="Cell">
        <title>Dual RING E3 architectures regulate multiubiquitination and ubiquitin chain elongation by APC/C.</title>
        <authorList>
            <person name="Brown N.G."/>
            <person name="VanderLinden R."/>
            <person name="Watson E.R."/>
            <person name="Weissmann F."/>
            <person name="Ordureau A."/>
            <person name="Wu K.P."/>
            <person name="Zhang W."/>
            <person name="Yu S."/>
            <person name="Mercredi P.Y."/>
            <person name="Harrison J.S."/>
            <person name="Davidson I.F."/>
            <person name="Qiao R."/>
            <person name="Lu Y."/>
            <person name="Dube P."/>
            <person name="Brunner M.R."/>
            <person name="Grace C.R."/>
            <person name="Miller D.J."/>
            <person name="Haselbach D."/>
            <person name="Jarvis M.A."/>
            <person name="Yamaguchi M."/>
            <person name="Yanishevski D."/>
            <person name="Petzold G."/>
            <person name="Sidhu S.S."/>
            <person name="Kuhlman B."/>
            <person name="Kirschner M.W."/>
            <person name="Harper J.W."/>
            <person name="Peters J.M."/>
            <person name="Stark H."/>
            <person name="Schulman B.A."/>
        </authorList>
    </citation>
    <scope>STRUCTURE BY ELECTRON MICROSCOPY (6.40 ANGSTROMS) IN COMPLEX WITH APC/C; UBE2C AND UBE2S</scope>
    <scope>INTERACTION WITH UBE2S</scope>
    <scope>MUTAGENESIS OF ASP-33</scope>
</reference>
<reference key="20">
    <citation type="journal article" date="2006" name="Science">
        <title>The consensus coding sequences of human breast and colorectal cancers.</title>
        <authorList>
            <person name="Sjoeblom T."/>
            <person name="Jones S."/>
            <person name="Wood L.D."/>
            <person name="Parsons D.W."/>
            <person name="Lin J."/>
            <person name="Barber T.D."/>
            <person name="Mandelker D."/>
            <person name="Leary R.J."/>
            <person name="Ptak J."/>
            <person name="Silliman N."/>
            <person name="Szabo S."/>
            <person name="Buckhaults P."/>
            <person name="Farrell C."/>
            <person name="Meeh P."/>
            <person name="Markowitz S.D."/>
            <person name="Willis J."/>
            <person name="Dawson D."/>
            <person name="Willson J.K.V."/>
            <person name="Gazdar A.F."/>
            <person name="Hartigan J."/>
            <person name="Wu L."/>
            <person name="Liu C."/>
            <person name="Parmigiani G."/>
            <person name="Park B.H."/>
            <person name="Bachman K.E."/>
            <person name="Papadopoulos N."/>
            <person name="Vogelstein B."/>
            <person name="Kinzler K.W."/>
            <person name="Velculescu V.E."/>
        </authorList>
    </citation>
    <scope>VARIANT [LARGE SCALE ANALYSIS] VAL-155</scope>
</reference>
<sequence length="808" mass="92116">MLRFPTCFPSFRVVGEKQLPQEIIFLVWSPKRDLIALANTAGEVLLHRLASFHRVWSFPPNENTGKEVTCLAWRPDGKLLAFALADTKKIVLCDVEKPESLHSFSVEAPVSCMHWMEVTVESSVLTSFYNAEDESNLLLPKLPTLPKNYSNTSKIFSEENSDEIIKLLGDVRLNILVLGGSSGFIELYAYGMFKIARVTGIAGTCLALCLSSDLKSLSVVTEVSTNGASEVSYFQLETNLLYSFLPEVTRMARKFTHISALLQYINLSLTCMCEAWEEILMQMDSRLTKFVQEKNTTTSVQDEFMHLLLWGKASAELQTLLMNQLTVKGLKKLGQSIESSYSSIQKLVISHLQSGSESLLYHLSELKGMASWKQKYEPLGLDAAGIEEAITAVGSFILKANELLQVIDSSMKNFKAFFRWLYVAMLRMTEDHVLPELNKMTQKDITFVAEFLTEHFNEAPDLYNRKGKYFNVERVGQYLKDEDDDLVSPPNTEGNQWYDFLQNSSHLKESPLLFPYYPRKSLHFVKRRMENIIDQCLQKPADVIGKSMNQAICIPLYRDTRSEDSTRRLFKFPFLWNNKTSNLHYLLFTILEDSLYKMCILRRHTDISQSVSNGLIAIKFGSFTYATTEKVRRSIYSCLDAQFYDDETVTVVLKDTVGREGRDRLLVQLPLSLVYNSEDSAEYQFTGTYSTRLDEQCSAIPTRTMHFEKHWRLLESMKAQYVAGNGFRKVSCVLSSNLRHVRVFEMDIDDEWELDESSDEEEEASNKPVKIKEEVLSESEAENQQAGAAALAPEIVIKVEKLDPELDS</sequence>
<keyword id="KW-0002">3D-structure</keyword>
<keyword id="KW-0025">Alternative splicing</keyword>
<keyword id="KW-0131">Cell cycle</keyword>
<keyword id="KW-0132">Cell division</keyword>
<keyword id="KW-1017">Isopeptide bond</keyword>
<keyword id="KW-0498">Mitosis</keyword>
<keyword id="KW-0539">Nucleus</keyword>
<keyword id="KW-0597">Phosphoprotein</keyword>
<keyword id="KW-1267">Proteomics identification</keyword>
<keyword id="KW-1185">Reference proteome</keyword>
<keyword id="KW-0832">Ubl conjugation</keyword>
<keyword id="KW-0833">Ubl conjugation pathway</keyword>
<name>APC4_HUMAN</name>
<proteinExistence type="evidence at protein level"/>
<dbReference type="EMBL" id="AF191338">
    <property type="protein sequence ID" value="AAF05752.1"/>
    <property type="molecule type" value="mRNA"/>
</dbReference>
<dbReference type="EMBL" id="AK292336">
    <property type="protein sequence ID" value="BAF85025.1"/>
    <property type="molecule type" value="mRNA"/>
</dbReference>
<dbReference type="EMBL" id="CH471069">
    <property type="protein sequence ID" value="EAW92839.1"/>
    <property type="molecule type" value="Genomic_DNA"/>
</dbReference>
<dbReference type="EMBL" id="BC059383">
    <property type="protein sequence ID" value="AAH59383.1"/>
    <property type="molecule type" value="mRNA"/>
</dbReference>
<dbReference type="EMBL" id="AL353932">
    <property type="protein sequence ID" value="CAB89245.1"/>
    <property type="molecule type" value="mRNA"/>
</dbReference>
<dbReference type="CCDS" id="CCDS3434.1">
    <molecule id="Q9UJX5-1"/>
</dbReference>
<dbReference type="CCDS" id="CCDS68684.1">
    <molecule id="Q9UJX5-3"/>
</dbReference>
<dbReference type="PIR" id="T48682">
    <property type="entry name" value="T48682"/>
</dbReference>
<dbReference type="RefSeq" id="NP_001273685.1">
    <molecule id="Q9UJX5-3"/>
    <property type="nucleotide sequence ID" value="NM_001286756.2"/>
</dbReference>
<dbReference type="RefSeq" id="NP_037499.2">
    <molecule id="Q9UJX5-1"/>
    <property type="nucleotide sequence ID" value="NM_013367.2"/>
</dbReference>
<dbReference type="PDB" id="4UI9">
    <property type="method" value="EM"/>
    <property type="resolution" value="3.60 A"/>
    <property type="chains" value="I=1-808"/>
</dbReference>
<dbReference type="PDB" id="5A31">
    <property type="method" value="EM"/>
    <property type="resolution" value="4.30 A"/>
    <property type="chains" value="I=1-808"/>
</dbReference>
<dbReference type="PDB" id="5BPW">
    <property type="method" value="X-ray"/>
    <property type="resolution" value="3.40 A"/>
    <property type="chains" value="A=1-808"/>
</dbReference>
<dbReference type="PDB" id="5G04">
    <property type="method" value="EM"/>
    <property type="resolution" value="4.00 A"/>
    <property type="chains" value="I=1-808"/>
</dbReference>
<dbReference type="PDB" id="5G05">
    <property type="method" value="EM"/>
    <property type="resolution" value="3.40 A"/>
    <property type="chains" value="I=1-808"/>
</dbReference>
<dbReference type="PDB" id="5KHR">
    <property type="method" value="EM"/>
    <property type="resolution" value="6.10 A"/>
    <property type="chains" value="I=1-808"/>
</dbReference>
<dbReference type="PDB" id="5KHU">
    <property type="method" value="EM"/>
    <property type="resolution" value="4.80 A"/>
    <property type="chains" value="I=1-808"/>
</dbReference>
<dbReference type="PDB" id="5L9T">
    <property type="method" value="EM"/>
    <property type="resolution" value="6.40 A"/>
    <property type="chains" value="I=1-808"/>
</dbReference>
<dbReference type="PDB" id="5L9U">
    <property type="method" value="EM"/>
    <property type="resolution" value="6.40 A"/>
    <property type="chains" value="I=1-808"/>
</dbReference>
<dbReference type="PDB" id="5LCW">
    <property type="method" value="EM"/>
    <property type="resolution" value="4.00 A"/>
    <property type="chains" value="I=1-808"/>
</dbReference>
<dbReference type="PDB" id="6Q6G">
    <property type="method" value="EM"/>
    <property type="resolution" value="3.20 A"/>
    <property type="chains" value="I=1-808"/>
</dbReference>
<dbReference type="PDB" id="6Q6H">
    <property type="method" value="EM"/>
    <property type="resolution" value="3.20 A"/>
    <property type="chains" value="I=1-808"/>
</dbReference>
<dbReference type="PDB" id="6TLJ">
    <property type="method" value="EM"/>
    <property type="resolution" value="3.80 A"/>
    <property type="chains" value="I=1-808"/>
</dbReference>
<dbReference type="PDB" id="6TM5">
    <property type="method" value="EM"/>
    <property type="resolution" value="3.90 A"/>
    <property type="chains" value="I=1-808"/>
</dbReference>
<dbReference type="PDB" id="6TNT">
    <property type="method" value="EM"/>
    <property type="resolution" value="3.78 A"/>
    <property type="chains" value="I=1-808"/>
</dbReference>
<dbReference type="PDB" id="8PKP">
    <property type="method" value="EM"/>
    <property type="resolution" value="3.20 A"/>
    <property type="chains" value="I=1-808"/>
</dbReference>
<dbReference type="PDB" id="8TAR">
    <property type="method" value="EM"/>
    <property type="resolution" value="4.00 A"/>
    <property type="chains" value="I=1-808"/>
</dbReference>
<dbReference type="PDB" id="8TAU">
    <property type="method" value="EM"/>
    <property type="resolution" value="3.50 A"/>
    <property type="chains" value="I=1-808"/>
</dbReference>
<dbReference type="PDB" id="9GAW">
    <property type="method" value="EM"/>
    <property type="resolution" value="2.90 A"/>
    <property type="chains" value="I=1-808"/>
</dbReference>
<dbReference type="PDBsum" id="4UI9"/>
<dbReference type="PDBsum" id="5A31"/>
<dbReference type="PDBsum" id="5BPW"/>
<dbReference type="PDBsum" id="5G04"/>
<dbReference type="PDBsum" id="5G05"/>
<dbReference type="PDBsum" id="5KHR"/>
<dbReference type="PDBsum" id="5KHU"/>
<dbReference type="PDBsum" id="5L9T"/>
<dbReference type="PDBsum" id="5L9U"/>
<dbReference type="PDBsum" id="5LCW"/>
<dbReference type="PDBsum" id="6Q6G"/>
<dbReference type="PDBsum" id="6Q6H"/>
<dbReference type="PDBsum" id="6TLJ"/>
<dbReference type="PDBsum" id="6TM5"/>
<dbReference type="PDBsum" id="6TNT"/>
<dbReference type="PDBsum" id="8PKP"/>
<dbReference type="PDBsum" id="8TAR"/>
<dbReference type="PDBsum" id="8TAU"/>
<dbReference type="PDBsum" id="9GAW"/>
<dbReference type="EMDB" id="EMD-10516"/>
<dbReference type="EMDB" id="EMD-10518"/>
<dbReference type="EMDB" id="EMD-10536"/>
<dbReference type="EMDB" id="EMD-13931"/>
<dbReference type="EMDB" id="EMD-17751"/>
<dbReference type="EMDB" id="EMD-19711"/>
<dbReference type="EMDB" id="EMD-2924"/>
<dbReference type="EMDB" id="EMD-2925"/>
<dbReference type="EMDB" id="EMD-3385"/>
<dbReference type="EMDB" id="EMD-3386"/>
<dbReference type="EMDB" id="EMD-3387"/>
<dbReference type="EMDB" id="EMD-3388"/>
<dbReference type="EMDB" id="EMD-3389"/>
<dbReference type="EMDB" id="EMD-3390"/>
<dbReference type="EMDB" id="EMD-4037"/>
<dbReference type="EMDB" id="EMD-41140"/>
<dbReference type="EMDB" id="EMD-41142"/>
<dbReference type="EMDB" id="EMD-4465"/>
<dbReference type="EMDB" id="EMD-4466"/>
<dbReference type="EMDB" id="EMD-4467"/>
<dbReference type="EMDB" id="EMD-51190"/>
<dbReference type="SMR" id="Q9UJX5"/>
<dbReference type="BioGRID" id="118982">
    <property type="interactions" value="153"/>
</dbReference>
<dbReference type="ComplexPortal" id="CPX-1860">
    <property type="entry name" value="Anaphase-promoting core complex"/>
</dbReference>
<dbReference type="CORUM" id="Q9UJX5"/>
<dbReference type="DIP" id="DIP-56450N"/>
<dbReference type="FunCoup" id="Q9UJX5">
    <property type="interactions" value="3878"/>
</dbReference>
<dbReference type="IntAct" id="Q9UJX5">
    <property type="interactions" value="73"/>
</dbReference>
<dbReference type="MINT" id="Q9UJX5"/>
<dbReference type="STRING" id="9606.ENSP00000426654"/>
<dbReference type="iPTMnet" id="Q9UJX5"/>
<dbReference type="PhosphoSitePlus" id="Q9UJX5"/>
<dbReference type="BioMuta" id="ANAPC4"/>
<dbReference type="DMDM" id="205371737"/>
<dbReference type="jPOST" id="Q9UJX5"/>
<dbReference type="MassIVE" id="Q9UJX5"/>
<dbReference type="PaxDb" id="9606-ENSP00000426654"/>
<dbReference type="PeptideAtlas" id="Q9UJX5"/>
<dbReference type="ProteomicsDB" id="19498"/>
<dbReference type="ProteomicsDB" id="84686">
    <molecule id="Q9UJX5-1"/>
</dbReference>
<dbReference type="ProteomicsDB" id="84687">
    <molecule id="Q9UJX5-2"/>
</dbReference>
<dbReference type="Pumba" id="Q9UJX5"/>
<dbReference type="Antibodypedia" id="23215">
    <property type="antibodies" value="218 antibodies from 34 providers"/>
</dbReference>
<dbReference type="DNASU" id="29945"/>
<dbReference type="Ensembl" id="ENST00000315368.8">
    <molecule id="Q9UJX5-1"/>
    <property type="protein sequence ID" value="ENSP00000318775.3"/>
    <property type="gene ID" value="ENSG00000053900.11"/>
</dbReference>
<dbReference type="Ensembl" id="ENST00000510092.5">
    <molecule id="Q9UJX5-3"/>
    <property type="protein sequence ID" value="ENSP00000426654.1"/>
    <property type="gene ID" value="ENSG00000053900.11"/>
</dbReference>
<dbReference type="GeneID" id="29945"/>
<dbReference type="KEGG" id="hsa:29945"/>
<dbReference type="MANE-Select" id="ENST00000315368.8">
    <property type="protein sequence ID" value="ENSP00000318775.3"/>
    <property type="RefSeq nucleotide sequence ID" value="NM_013367.3"/>
    <property type="RefSeq protein sequence ID" value="NP_037499.2"/>
</dbReference>
<dbReference type="UCSC" id="uc003gro.4">
    <molecule id="Q9UJX5-1"/>
    <property type="organism name" value="human"/>
</dbReference>
<dbReference type="AGR" id="HGNC:19990"/>
<dbReference type="CTD" id="29945"/>
<dbReference type="DisGeNET" id="29945"/>
<dbReference type="GeneCards" id="ANAPC4"/>
<dbReference type="HGNC" id="HGNC:19990">
    <property type="gene designation" value="ANAPC4"/>
</dbReference>
<dbReference type="HPA" id="ENSG00000053900">
    <property type="expression patterns" value="Low tissue specificity"/>
</dbReference>
<dbReference type="MIM" id="606947">
    <property type="type" value="gene"/>
</dbReference>
<dbReference type="neXtProt" id="NX_Q9UJX5"/>
<dbReference type="OpenTargets" id="ENSG00000053900"/>
<dbReference type="PharmGKB" id="PA134894250"/>
<dbReference type="VEuPathDB" id="HostDB:ENSG00000053900"/>
<dbReference type="eggNOG" id="KOG4640">
    <property type="taxonomic scope" value="Eukaryota"/>
</dbReference>
<dbReference type="GeneTree" id="ENSGT00390000004612"/>
<dbReference type="HOGENOM" id="CLU_018724_0_0_1"/>
<dbReference type="InParanoid" id="Q9UJX5"/>
<dbReference type="OMA" id="HCKLFVP"/>
<dbReference type="OrthoDB" id="2110451at2759"/>
<dbReference type="PAN-GO" id="Q9UJX5">
    <property type="GO annotations" value="4 GO annotations based on evolutionary models"/>
</dbReference>
<dbReference type="PhylomeDB" id="Q9UJX5"/>
<dbReference type="TreeFam" id="TF105443"/>
<dbReference type="PathwayCommons" id="Q9UJX5"/>
<dbReference type="Reactome" id="R-HSA-141430">
    <property type="pathway name" value="Inactivation of APC/C via direct inhibition of the APC/C complex"/>
</dbReference>
<dbReference type="Reactome" id="R-HSA-174048">
    <property type="pathway name" value="APC/C:Cdc20 mediated degradation of Cyclin B"/>
</dbReference>
<dbReference type="Reactome" id="R-HSA-174084">
    <property type="pathway name" value="Autodegradation of Cdh1 by Cdh1:APC/C"/>
</dbReference>
<dbReference type="Reactome" id="R-HSA-174154">
    <property type="pathway name" value="APC/C:Cdc20 mediated degradation of Securin"/>
</dbReference>
<dbReference type="Reactome" id="R-HSA-174178">
    <property type="pathway name" value="APC/C:Cdh1 mediated degradation of Cdc20 and other APC/C:Cdh1 targeted proteins in late mitosis/early G1"/>
</dbReference>
<dbReference type="Reactome" id="R-HSA-174184">
    <property type="pathway name" value="Cdc20:Phospho-APC/C mediated degradation of Cyclin A"/>
</dbReference>
<dbReference type="Reactome" id="R-HSA-176407">
    <property type="pathway name" value="Conversion from APC/C:Cdc20 to APC/C:Cdh1 in late anaphase"/>
</dbReference>
<dbReference type="Reactome" id="R-HSA-176408">
    <property type="pathway name" value="Regulation of APC/C activators between G1/S and early anaphase"/>
</dbReference>
<dbReference type="Reactome" id="R-HSA-176409">
    <property type="pathway name" value="APC/C:Cdc20 mediated degradation of mitotic proteins"/>
</dbReference>
<dbReference type="Reactome" id="R-HSA-176412">
    <property type="pathway name" value="Phosphorylation of the APC/C"/>
</dbReference>
<dbReference type="Reactome" id="R-HSA-179409">
    <property type="pathway name" value="APC-Cdc20 mediated degradation of Nek2A"/>
</dbReference>
<dbReference type="Reactome" id="R-HSA-2467813">
    <property type="pathway name" value="Separation of Sister Chromatids"/>
</dbReference>
<dbReference type="Reactome" id="R-HSA-2559582">
    <property type="pathway name" value="Senescence-Associated Secretory Phenotype (SASP)"/>
</dbReference>
<dbReference type="Reactome" id="R-HSA-68867">
    <property type="pathway name" value="Assembly of the pre-replicative complex"/>
</dbReference>
<dbReference type="Reactome" id="R-HSA-69017">
    <property type="pathway name" value="CDK-mediated phosphorylation and removal of Cdc6"/>
</dbReference>
<dbReference type="Reactome" id="R-HSA-8853884">
    <property type="pathway name" value="Transcriptional Regulation by VENTX"/>
</dbReference>
<dbReference type="Reactome" id="R-HSA-9687136">
    <property type="pathway name" value="Aberrant regulation of mitotic exit in cancer due to RB1 defects"/>
</dbReference>
<dbReference type="Reactome" id="R-HSA-983168">
    <property type="pathway name" value="Antigen processing: Ubiquitination &amp; Proteasome degradation"/>
</dbReference>
<dbReference type="SignaLink" id="Q9UJX5"/>
<dbReference type="SIGNOR" id="Q9UJX5"/>
<dbReference type="UniPathway" id="UPA00143"/>
<dbReference type="BioGRID-ORCS" id="29945">
    <property type="hits" value="819 hits in 1147 CRISPR screens"/>
</dbReference>
<dbReference type="ChiTaRS" id="ANAPC4">
    <property type="organism name" value="human"/>
</dbReference>
<dbReference type="EvolutionaryTrace" id="Q9UJX5"/>
<dbReference type="GeneWiki" id="ANAPC4"/>
<dbReference type="GenomeRNAi" id="29945"/>
<dbReference type="Pharos" id="Q9UJX5">
    <property type="development level" value="Tbio"/>
</dbReference>
<dbReference type="PRO" id="PR:Q9UJX5"/>
<dbReference type="Proteomes" id="UP000005640">
    <property type="component" value="Chromosome 4"/>
</dbReference>
<dbReference type="RNAct" id="Q9UJX5">
    <property type="molecule type" value="protein"/>
</dbReference>
<dbReference type="Bgee" id="ENSG00000053900">
    <property type="expression patterns" value="Expressed in oviduct epithelium and 187 other cell types or tissues"/>
</dbReference>
<dbReference type="ExpressionAtlas" id="Q9UJX5">
    <property type="expression patterns" value="baseline and differential"/>
</dbReference>
<dbReference type="GO" id="GO:0005680">
    <property type="term" value="C:anaphase-promoting complex"/>
    <property type="evidence" value="ECO:0000314"/>
    <property type="project" value="UniProtKB"/>
</dbReference>
<dbReference type="GO" id="GO:0005829">
    <property type="term" value="C:cytosol"/>
    <property type="evidence" value="ECO:0000304"/>
    <property type="project" value="Reactome"/>
</dbReference>
<dbReference type="GO" id="GO:0034399">
    <property type="term" value="C:nuclear periphery"/>
    <property type="evidence" value="ECO:0000318"/>
    <property type="project" value="GO_Central"/>
</dbReference>
<dbReference type="GO" id="GO:0005654">
    <property type="term" value="C:nucleoplasm"/>
    <property type="evidence" value="ECO:0000304"/>
    <property type="project" value="Reactome"/>
</dbReference>
<dbReference type="GO" id="GO:0005634">
    <property type="term" value="C:nucleus"/>
    <property type="evidence" value="ECO:0000314"/>
    <property type="project" value="UniProtKB"/>
</dbReference>
<dbReference type="GO" id="GO:0019903">
    <property type="term" value="F:protein phosphatase binding"/>
    <property type="evidence" value="ECO:0000353"/>
    <property type="project" value="BHF-UCL"/>
</dbReference>
<dbReference type="GO" id="GO:0004842">
    <property type="term" value="F:ubiquitin-protein transferase activity"/>
    <property type="evidence" value="ECO:0000304"/>
    <property type="project" value="ProtInc"/>
</dbReference>
<dbReference type="GO" id="GO:0031145">
    <property type="term" value="P:anaphase-promoting complex-dependent catabolic process"/>
    <property type="evidence" value="ECO:0000314"/>
    <property type="project" value="UniProtKB"/>
</dbReference>
<dbReference type="GO" id="GO:0051301">
    <property type="term" value="P:cell division"/>
    <property type="evidence" value="ECO:0007669"/>
    <property type="project" value="UniProtKB-KW"/>
</dbReference>
<dbReference type="GO" id="GO:0141198">
    <property type="term" value="P:protein branched polyubiquitination"/>
    <property type="evidence" value="ECO:0000314"/>
    <property type="project" value="UniProtKB"/>
</dbReference>
<dbReference type="GO" id="GO:0070979">
    <property type="term" value="P:protein K11-linked ubiquitination"/>
    <property type="evidence" value="ECO:0000314"/>
    <property type="project" value="UniProtKB"/>
</dbReference>
<dbReference type="GO" id="GO:0070936">
    <property type="term" value="P:protein K48-linked ubiquitination"/>
    <property type="evidence" value="ECO:0000314"/>
    <property type="project" value="UniProtKB"/>
</dbReference>
<dbReference type="GO" id="GO:0051445">
    <property type="term" value="P:regulation of meiotic cell cycle"/>
    <property type="evidence" value="ECO:0000303"/>
    <property type="project" value="ComplexPortal"/>
</dbReference>
<dbReference type="GO" id="GO:0007346">
    <property type="term" value="P:regulation of mitotic cell cycle"/>
    <property type="evidence" value="ECO:0000303"/>
    <property type="project" value="ComplexPortal"/>
</dbReference>
<dbReference type="GO" id="GO:0030071">
    <property type="term" value="P:regulation of mitotic metaphase/anaphase transition"/>
    <property type="evidence" value="ECO:0007669"/>
    <property type="project" value="InterPro"/>
</dbReference>
<dbReference type="DisProt" id="DP01478"/>
<dbReference type="FunFam" id="2.130.10.10:FF:001243">
    <property type="entry name" value="Anaphase-promoting complex subunit 4"/>
    <property type="match status" value="1"/>
</dbReference>
<dbReference type="Gene3D" id="2.130.10.10">
    <property type="entry name" value="YVTN repeat-like/Quinoprotein amine dehydrogenase"/>
    <property type="match status" value="1"/>
</dbReference>
<dbReference type="InterPro" id="IPR024789">
    <property type="entry name" value="APC4"/>
</dbReference>
<dbReference type="InterPro" id="IPR024977">
    <property type="entry name" value="Apc4-like_WD40_dom"/>
</dbReference>
<dbReference type="InterPro" id="IPR056358">
    <property type="entry name" value="APC4_C"/>
</dbReference>
<dbReference type="InterPro" id="IPR024790">
    <property type="entry name" value="APC4_long_dom"/>
</dbReference>
<dbReference type="InterPro" id="IPR017169">
    <property type="entry name" value="APC4_metazoa"/>
</dbReference>
<dbReference type="InterPro" id="IPR015943">
    <property type="entry name" value="WD40/YVTN_repeat-like_dom_sf"/>
</dbReference>
<dbReference type="InterPro" id="IPR036322">
    <property type="entry name" value="WD40_repeat_dom_sf"/>
</dbReference>
<dbReference type="PANTHER" id="PTHR13260">
    <property type="entry name" value="ANAPHASE PROMOTING COMPLEX SUBUNIT 4 APC4"/>
    <property type="match status" value="1"/>
</dbReference>
<dbReference type="PANTHER" id="PTHR13260:SF0">
    <property type="entry name" value="ANAPHASE-PROMOTING COMPLEX SUBUNIT 4"/>
    <property type="match status" value="1"/>
</dbReference>
<dbReference type="Pfam" id="PF12896">
    <property type="entry name" value="ANAPC4"/>
    <property type="match status" value="1"/>
</dbReference>
<dbReference type="Pfam" id="PF12894">
    <property type="entry name" value="ANAPC4_WD40"/>
    <property type="match status" value="1"/>
</dbReference>
<dbReference type="Pfam" id="PF23405">
    <property type="entry name" value="WD40_APC4_C-half"/>
    <property type="match status" value="1"/>
</dbReference>
<dbReference type="PIRSF" id="PIRSF037303">
    <property type="entry name" value="APC4"/>
    <property type="match status" value="1"/>
</dbReference>
<dbReference type="SUPFAM" id="SSF50978">
    <property type="entry name" value="WD40 repeat-like"/>
    <property type="match status" value="1"/>
</dbReference>
<protein>
    <recommendedName>
        <fullName>Anaphase-promoting complex subunit 4</fullName>
        <shortName>APC4</shortName>
    </recommendedName>
    <alternativeName>
        <fullName>Cyclosome subunit 4</fullName>
    </alternativeName>
</protein>
<comment type="function">
    <text evidence="4 8">Component of the anaphase promoting complex/cyclosome (APC/C), a cell cycle-regulated E3 ubiquitin ligase that controls progression through mitosis and the G1 phase of the cell cycle (PubMed:18485873). The APC/C complex acts by mediating ubiquitination and subsequent degradation of target proteins: it mainly mediates the formation of 'Lys-11'-linked polyubiquitin chains and, to a lower extent, the formation of 'Lys-48'- and 'Lys-63'-linked polyubiquitin chains (PubMed:18485873). The APC/C complex catalyzes assembly of branched 'Lys-11'-/'Lys-48'-linked branched ubiquitin chains on target proteins (PubMed:29033132).</text>
</comment>
<comment type="pathway">
    <text evidence="4 8">Protein modification; protein ubiquitination.</text>
</comment>
<comment type="subunit">
    <text evidence="5 6 7 9 10">The mammalian APC/C is composed at least of 14 distinct subunits ANAPC1, ANAPC2, CDC27/APC3, ANAPC4, ANAPC5, CDC16/APC6, ANAPC7, CDC23/APC8, ANAPC10, ANAPC11, CDC26/APC12, ANAPC13, ANAPC15 and ANAPC16 that assemble into a complex of at least 19 chains with a combined molecular mass of around 1.2 MDa; APC/C interacts with FZR1 and FBXO5 (PubMed:25043029, PubMed:26083744, PubMed:27259151, PubMed:9469815). In the context of the APC/C complex, directly interacts with UBE2S (PubMed:27259151). Interacts with FBXO43.</text>
</comment>
<comment type="interaction">
    <interactant intactId="EBI-2554854">
        <id>Q9UJX5</id>
    </interactant>
    <interactant intactId="EBI-367462">
        <id>Q12834</id>
        <label>CDC20</label>
    </interactant>
    <organismsDiffer>false</organismsDiffer>
    <experiments>10</experiments>
</comment>
<comment type="interaction">
    <interactant intactId="EBI-2554854">
        <id>Q9UJX5</id>
    </interactant>
    <interactant intactId="EBI-994813">
        <id>P30260</id>
        <label>CDC27</label>
    </interactant>
    <organismsDiffer>false</organismsDiffer>
    <experiments>10</experiments>
</comment>
<comment type="interaction">
    <interactant intactId="EBI-2554854">
        <id>Q9UJX5</id>
    </interactant>
    <interactant intactId="EBI-355426">
        <id>Q8NI77</id>
        <label>KIF18A</label>
    </interactant>
    <organismsDiffer>false</organismsDiffer>
    <experiments>3</experiments>
</comment>
<comment type="interaction">
    <interactant intactId="EBI-2554854">
        <id>Q9UJX5</id>
    </interactant>
    <interactant intactId="EBI-633182">
        <id>P51955</id>
        <label>NEK2</label>
    </interactant>
    <organismsDiffer>false</organismsDiffer>
    <experiments>7</experiments>
</comment>
<comment type="subcellular location">
    <subcellularLocation>
        <location evidence="3">Nucleus</location>
    </subcellularLocation>
</comment>
<comment type="alternative products">
    <event type="alternative splicing"/>
    <isoform>
        <id>Q9UJX5-1</id>
        <name>1</name>
        <sequence type="displayed"/>
    </isoform>
    <isoform>
        <id>Q9UJX5-2</id>
        <name>2</name>
        <sequence type="described" ref="VSP_008464 VSP_008465"/>
    </isoform>
    <isoform>
        <id>Q9UJX5-3</id>
        <name>3</name>
        <sequence type="described" ref="VSP_056708"/>
    </isoform>
</comment>
<comment type="similarity">
    <text evidence="12">Belongs to the APC4 family.</text>
</comment>
<feature type="chain" id="PRO_0000064595" description="Anaphase-promoting complex subunit 4">
    <location>
        <begin position="1"/>
        <end position="808"/>
    </location>
</feature>
<feature type="modified residue" description="Phosphotyrosine" evidence="1">
    <location>
        <position position="469"/>
    </location>
</feature>
<feature type="modified residue" description="Phosphoserine" evidence="17">
    <location>
        <position position="757"/>
    </location>
</feature>
<feature type="modified residue" description="Phosphoserine" evidence="17">
    <location>
        <position position="758"/>
    </location>
</feature>
<feature type="modified residue" description="Phosphoserine" evidence="17 18">
    <location>
        <position position="777"/>
    </location>
</feature>
<feature type="modified residue" description="Phosphoserine" evidence="1">
    <location>
        <position position="779"/>
    </location>
</feature>
<feature type="cross-link" description="Glycyl lysine isopeptide (Lys-Gly) (interchain with G-Cter in SUMO2)" evidence="19">
    <location>
        <position position="772"/>
    </location>
</feature>
<feature type="cross-link" description="Glycyl lysine isopeptide (Lys-Gly) (interchain with G-Cter in SUMO2)" evidence="19">
    <location>
        <position position="798"/>
    </location>
</feature>
<feature type="splice variant" id="VSP_056708" description="In isoform 3." evidence="12">
    <original>K</original>
    <variation>KV</variation>
    <location>
        <position position="439"/>
    </location>
</feature>
<feature type="splice variant" id="VSP_008464" description="In isoform 2." evidence="11">
    <original>DVIGKSMNQA</original>
    <variation>VSLKEMHVFV</variation>
    <location>
        <begin position="542"/>
        <end position="551"/>
    </location>
</feature>
<feature type="splice variant" id="VSP_008465" description="In isoform 2." evidence="11">
    <location>
        <begin position="552"/>
        <end position="808"/>
    </location>
</feature>
<feature type="sequence variant" id="VAR_035792" description="In a colorectal cancer sample; somatic mutation." evidence="2">
    <original>I</original>
    <variation>V</variation>
    <location>
        <position position="155"/>
    </location>
</feature>
<feature type="sequence variant" id="VAR_054044" description="In dbSNP:rs34811474.">
    <original>R</original>
    <variation>Q</variation>
    <location>
        <position position="465"/>
    </location>
</feature>
<feature type="sequence variant" id="VAR_054045" description="In dbSNP:rs11550697.">
    <original>E</original>
    <variation>G</variation>
    <location>
        <position position="800"/>
    </location>
</feature>
<feature type="mutagenesis site" description="Impairs UBE2S-mediated polyubiquitination, decreasing substrate affinity. Does not affect UBE2C-mediated multiubiquitination." evidence="7">
    <original>D</original>
    <variation>K</variation>
    <location>
        <position position="33"/>
    </location>
</feature>
<feature type="sequence conflict" description="In Ref. 1; AAF05752." evidence="12" ref="1">
    <original>R</original>
    <variation>C</variation>
    <location>
        <position position="286"/>
    </location>
</feature>
<feature type="sequence conflict" description="In Ref. 1; AAF05752." evidence="12" ref="1">
    <original>EKN</original>
    <variation>GKD</variation>
    <location>
        <begin position="293"/>
        <end position="295"/>
    </location>
</feature>
<feature type="sequence conflict" description="In Ref. 4; AAH59383." evidence="12" ref="4">
    <original>E</original>
    <variation>G</variation>
    <location>
        <position position="756"/>
    </location>
</feature>
<feature type="strand" evidence="23">
    <location>
        <begin position="10"/>
        <end position="18"/>
    </location>
</feature>
<feature type="strand" evidence="23">
    <location>
        <begin position="23"/>
        <end position="28"/>
    </location>
</feature>
<feature type="strand" evidence="23">
    <location>
        <begin position="32"/>
        <end position="39"/>
    </location>
</feature>
<feature type="turn" evidence="22">
    <location>
        <begin position="40"/>
        <end position="42"/>
    </location>
</feature>
<feature type="strand" evidence="23">
    <location>
        <begin position="44"/>
        <end position="49"/>
    </location>
</feature>
<feature type="helix" evidence="23">
    <location>
        <begin position="50"/>
        <end position="52"/>
    </location>
</feature>
<feature type="strand" evidence="23">
    <location>
        <begin position="54"/>
        <end position="58"/>
    </location>
</feature>
<feature type="turn" evidence="23">
    <location>
        <begin position="62"/>
        <end position="64"/>
    </location>
</feature>
<feature type="strand" evidence="23">
    <location>
        <begin position="71"/>
        <end position="73"/>
    </location>
</feature>
<feature type="strand" evidence="23">
    <location>
        <begin position="77"/>
        <end position="84"/>
    </location>
</feature>
<feature type="turn" evidence="23">
    <location>
        <begin position="85"/>
        <end position="88"/>
    </location>
</feature>
<feature type="strand" evidence="23">
    <location>
        <begin position="89"/>
        <end position="94"/>
    </location>
</feature>
<feature type="strand" evidence="23">
    <location>
        <begin position="97"/>
        <end position="105"/>
    </location>
</feature>
<feature type="strand" evidence="23">
    <location>
        <begin position="111"/>
        <end position="117"/>
    </location>
</feature>
<feature type="helix" evidence="20">
    <location>
        <begin position="120"/>
        <end position="122"/>
    </location>
</feature>
<feature type="helix" evidence="21">
    <location>
        <begin position="123"/>
        <end position="138"/>
    </location>
</feature>
<feature type="helix" evidence="22">
    <location>
        <begin position="148"/>
        <end position="152"/>
    </location>
</feature>
<feature type="turn" evidence="23">
    <location>
        <begin position="155"/>
        <end position="157"/>
    </location>
</feature>
<feature type="helix" evidence="23">
    <location>
        <begin position="161"/>
        <end position="169"/>
    </location>
</feature>
<feature type="strand" evidence="22">
    <location>
        <begin position="170"/>
        <end position="172"/>
    </location>
</feature>
<feature type="strand" evidence="23">
    <location>
        <begin position="174"/>
        <end position="179"/>
    </location>
</feature>
<feature type="strand" evidence="20">
    <location>
        <begin position="181"/>
        <end position="183"/>
    </location>
</feature>
<feature type="strand" evidence="23">
    <location>
        <begin position="185"/>
        <end position="189"/>
    </location>
</feature>
<feature type="turn" evidence="23">
    <location>
        <begin position="190"/>
        <end position="192"/>
    </location>
</feature>
<feature type="strand" evidence="23">
    <location>
        <begin position="193"/>
        <end position="198"/>
    </location>
</feature>
<feature type="strand" evidence="23">
    <location>
        <begin position="203"/>
        <end position="210"/>
    </location>
</feature>
<feature type="strand" evidence="23">
    <location>
        <begin position="214"/>
        <end position="225"/>
    </location>
</feature>
<feature type="strand" evidence="23">
    <location>
        <begin position="228"/>
        <end position="237"/>
    </location>
</feature>
<feature type="helix" evidence="23">
    <location>
        <begin position="239"/>
        <end position="243"/>
    </location>
</feature>
<feature type="helix" evidence="23">
    <location>
        <begin position="245"/>
        <end position="275"/>
    </location>
</feature>
<feature type="helix" evidence="23">
    <location>
        <begin position="278"/>
        <end position="281"/>
    </location>
</feature>
<feature type="helix" evidence="23">
    <location>
        <begin position="282"/>
        <end position="293"/>
    </location>
</feature>
<feature type="helix" evidence="23">
    <location>
        <begin position="300"/>
        <end position="310"/>
    </location>
</feature>
<feature type="helix" evidence="23">
    <location>
        <begin position="315"/>
        <end position="322"/>
    </location>
</feature>
<feature type="helix" evidence="23">
    <location>
        <begin position="327"/>
        <end position="370"/>
    </location>
</feature>
<feature type="helix" evidence="23">
    <location>
        <begin position="373"/>
        <end position="376"/>
    </location>
</feature>
<feature type="helix" evidence="23">
    <location>
        <begin position="377"/>
        <end position="379"/>
    </location>
</feature>
<feature type="helix" evidence="23">
    <location>
        <begin position="383"/>
        <end position="428"/>
    </location>
</feature>
<feature type="strand" evidence="22">
    <location>
        <begin position="429"/>
        <end position="431"/>
    </location>
</feature>
<feature type="turn" evidence="21">
    <location>
        <begin position="435"/>
        <end position="438"/>
    </location>
</feature>
<feature type="helix" evidence="23">
    <location>
        <begin position="442"/>
        <end position="455"/>
    </location>
</feature>
<feature type="helix" evidence="23">
    <location>
        <begin position="476"/>
        <end position="479"/>
    </location>
</feature>
<feature type="helix" evidence="23">
    <location>
        <begin position="496"/>
        <end position="503"/>
    </location>
</feature>
<feature type="strand" evidence="23">
    <location>
        <begin position="505"/>
        <end position="507"/>
    </location>
</feature>
<feature type="strand" evidence="23">
    <location>
        <begin position="511"/>
        <end position="513"/>
    </location>
</feature>
<feature type="strand" evidence="20">
    <location>
        <begin position="518"/>
        <end position="520"/>
    </location>
</feature>
<feature type="helix" evidence="23">
    <location>
        <begin position="522"/>
        <end position="547"/>
    </location>
</feature>
<feature type="strand" evidence="23">
    <location>
        <begin position="549"/>
        <end position="559"/>
    </location>
</feature>
<feature type="turn" evidence="23">
    <location>
        <begin position="561"/>
        <end position="563"/>
    </location>
</feature>
<feature type="strand" evidence="22">
    <location>
        <begin position="564"/>
        <end position="566"/>
    </location>
</feature>
<feature type="strand" evidence="23">
    <location>
        <begin position="573"/>
        <end position="578"/>
    </location>
</feature>
<feature type="turn" evidence="23">
    <location>
        <begin position="579"/>
        <end position="582"/>
    </location>
</feature>
<feature type="strand" evidence="23">
    <location>
        <begin position="583"/>
        <end position="592"/>
    </location>
</feature>
<feature type="strand" evidence="23">
    <location>
        <begin position="595"/>
        <end position="606"/>
    </location>
</feature>
<feature type="strand" evidence="23">
    <location>
        <begin position="615"/>
        <end position="623"/>
    </location>
</feature>
<feature type="turn" evidence="23">
    <location>
        <begin position="626"/>
        <end position="628"/>
    </location>
</feature>
<feature type="strand" evidence="23">
    <location>
        <begin position="636"/>
        <end position="645"/>
    </location>
</feature>
<feature type="strand" evidence="23">
    <location>
        <begin position="648"/>
        <end position="658"/>
    </location>
</feature>
<feature type="strand" evidence="23">
    <location>
        <begin position="660"/>
        <end position="662"/>
    </location>
</feature>
<feature type="strand" evidence="23">
    <location>
        <begin position="668"/>
        <end position="670"/>
    </location>
</feature>
<feature type="helix" evidence="23">
    <location>
        <begin position="671"/>
        <end position="674"/>
    </location>
</feature>
<feature type="turn" evidence="23">
    <location>
        <begin position="678"/>
        <end position="682"/>
    </location>
</feature>
<feature type="strand" evidence="23">
    <location>
        <begin position="689"/>
        <end position="691"/>
    </location>
</feature>
<feature type="strand" evidence="23">
    <location>
        <begin position="693"/>
        <end position="695"/>
    </location>
</feature>
<feature type="turn" evidence="23">
    <location>
        <begin position="697"/>
        <end position="699"/>
    </location>
</feature>
<feature type="strand" evidence="23">
    <location>
        <begin position="702"/>
        <end position="707"/>
    </location>
</feature>
<feature type="strand" evidence="20">
    <location>
        <begin position="709"/>
        <end position="713"/>
    </location>
</feature>
<feature type="helix" evidence="22">
    <location>
        <begin position="715"/>
        <end position="717"/>
    </location>
</feature>
<feature type="strand" evidence="23">
    <location>
        <begin position="719"/>
        <end position="725"/>
    </location>
</feature>
<feature type="turn" evidence="23">
    <location>
        <begin position="726"/>
        <end position="729"/>
    </location>
</feature>
<feature type="strand" evidence="23">
    <location>
        <begin position="730"/>
        <end position="735"/>
    </location>
</feature>
<feature type="strand" evidence="23">
    <location>
        <begin position="738"/>
        <end position="748"/>
    </location>
</feature>
<organism>
    <name type="scientific">Homo sapiens</name>
    <name type="common">Human</name>
    <dbReference type="NCBI Taxonomy" id="9606"/>
    <lineage>
        <taxon>Eukaryota</taxon>
        <taxon>Metazoa</taxon>
        <taxon>Chordata</taxon>
        <taxon>Craniata</taxon>
        <taxon>Vertebrata</taxon>
        <taxon>Euteleostomi</taxon>
        <taxon>Mammalia</taxon>
        <taxon>Eutheria</taxon>
        <taxon>Euarchontoglires</taxon>
        <taxon>Primates</taxon>
        <taxon>Haplorrhini</taxon>
        <taxon>Catarrhini</taxon>
        <taxon>Hominidae</taxon>
        <taxon>Homo</taxon>
    </lineage>
</organism>
<evidence type="ECO:0000269" key="1">
    <source>
    </source>
</evidence>
<evidence type="ECO:0000269" key="2">
    <source>
    </source>
</evidence>
<evidence type="ECO:0000269" key="3">
    <source>
    </source>
</evidence>
<evidence type="ECO:0000269" key="4">
    <source>
    </source>
</evidence>
<evidence type="ECO:0000269" key="5">
    <source>
    </source>
</evidence>
<evidence type="ECO:0000269" key="6">
    <source>
    </source>
</evidence>
<evidence type="ECO:0000269" key="7">
    <source>
    </source>
</evidence>
<evidence type="ECO:0000269" key="8">
    <source>
    </source>
</evidence>
<evidence type="ECO:0000269" key="9">
    <source>
    </source>
</evidence>
<evidence type="ECO:0000269" key="10">
    <source>
    </source>
</evidence>
<evidence type="ECO:0000303" key="11">
    <source>
    </source>
</evidence>
<evidence type="ECO:0000305" key="12"/>
<evidence type="ECO:0007744" key="13">
    <source>
        <dbReference type="PDB" id="4UI9"/>
    </source>
</evidence>
<evidence type="ECO:0007744" key="14">
    <source>
        <dbReference type="PDB" id="5A31"/>
    </source>
</evidence>
<evidence type="ECO:0007744" key="15">
    <source>
        <dbReference type="PDB" id="5L9T"/>
    </source>
</evidence>
<evidence type="ECO:0007744" key="16">
    <source>
        <dbReference type="PDB" id="5L9U"/>
    </source>
</evidence>
<evidence type="ECO:0007744" key="17">
    <source>
    </source>
</evidence>
<evidence type="ECO:0007744" key="18">
    <source>
    </source>
</evidence>
<evidence type="ECO:0007744" key="19">
    <source>
    </source>
</evidence>
<evidence type="ECO:0007829" key="20">
    <source>
        <dbReference type="PDB" id="6Q6G"/>
    </source>
</evidence>
<evidence type="ECO:0007829" key="21">
    <source>
        <dbReference type="PDB" id="8PKP"/>
    </source>
</evidence>
<evidence type="ECO:0007829" key="22">
    <source>
        <dbReference type="PDB" id="8TAU"/>
    </source>
</evidence>
<evidence type="ECO:0007829" key="23">
    <source>
        <dbReference type="PDB" id="9GAW"/>
    </source>
</evidence>